<name>CRL_YERPE</name>
<comment type="function">
    <text evidence="1">Binds to the sigma-S subunit of RNA polymerase, activating expression of sigma-S-regulated genes. Stimulates RNA polymerase holoenzyme formation and may bind to several other sigma factors, such as sigma-70 and sigma-32.</text>
</comment>
<comment type="subcellular location">
    <subcellularLocation>
        <location evidence="1">Cytoplasm</location>
    </subcellularLocation>
</comment>
<comment type="similarity">
    <text evidence="1">Belongs to the Crl family.</text>
</comment>
<accession>Q7CK59</accession>
<accession>Q74WW7</accession>
<gene>
    <name evidence="1" type="primary">crl</name>
    <name type="ordered locus">YPO3223</name>
    <name type="ordered locus">y0965</name>
    <name type="ordered locus">YP_0710</name>
</gene>
<evidence type="ECO:0000255" key="1">
    <source>
        <dbReference type="HAMAP-Rule" id="MF_01178"/>
    </source>
</evidence>
<organism>
    <name type="scientific">Yersinia pestis</name>
    <dbReference type="NCBI Taxonomy" id="632"/>
    <lineage>
        <taxon>Bacteria</taxon>
        <taxon>Pseudomonadati</taxon>
        <taxon>Pseudomonadota</taxon>
        <taxon>Gammaproteobacteria</taxon>
        <taxon>Enterobacterales</taxon>
        <taxon>Yersiniaceae</taxon>
        <taxon>Yersinia</taxon>
    </lineage>
</organism>
<keyword id="KW-0010">Activator</keyword>
<keyword id="KW-0963">Cytoplasm</keyword>
<keyword id="KW-1185">Reference proteome</keyword>
<keyword id="KW-0804">Transcription</keyword>
<keyword id="KW-0805">Transcription regulation</keyword>
<feature type="chain" id="PRO_0000268913" description="Sigma factor-binding protein Crl">
    <location>
        <begin position="1"/>
        <end position="133"/>
    </location>
</feature>
<feature type="region of interest" description="Essential for activity" evidence="1">
    <location>
        <begin position="99"/>
        <end position="122"/>
    </location>
</feature>
<reference key="1">
    <citation type="journal article" date="2002" name="J. Bacteriol.">
        <title>Genome sequence of Yersinia pestis KIM.</title>
        <authorList>
            <person name="Deng W."/>
            <person name="Burland V."/>
            <person name="Plunkett G. III"/>
            <person name="Boutin A."/>
            <person name="Mayhew G.F."/>
            <person name="Liss P."/>
            <person name="Perna N.T."/>
            <person name="Rose D.J."/>
            <person name="Mau B."/>
            <person name="Zhou S."/>
            <person name="Schwartz D.C."/>
            <person name="Fetherston J.D."/>
            <person name="Lindler L.E."/>
            <person name="Brubaker R.R."/>
            <person name="Plano G.V."/>
            <person name="Straley S.C."/>
            <person name="McDonough K.A."/>
            <person name="Nilles M.L."/>
            <person name="Matson J.S."/>
            <person name="Blattner F.R."/>
            <person name="Perry R.D."/>
        </authorList>
    </citation>
    <scope>NUCLEOTIDE SEQUENCE [LARGE SCALE GENOMIC DNA]</scope>
    <source>
        <strain>KIM10+ / Biovar Mediaevalis</strain>
    </source>
</reference>
<reference key="2">
    <citation type="journal article" date="2001" name="Nature">
        <title>Genome sequence of Yersinia pestis, the causative agent of plague.</title>
        <authorList>
            <person name="Parkhill J."/>
            <person name="Wren B.W."/>
            <person name="Thomson N.R."/>
            <person name="Titball R.W."/>
            <person name="Holden M.T.G."/>
            <person name="Prentice M.B."/>
            <person name="Sebaihia M."/>
            <person name="James K.D."/>
            <person name="Churcher C.M."/>
            <person name="Mungall K.L."/>
            <person name="Baker S."/>
            <person name="Basham D."/>
            <person name="Bentley S.D."/>
            <person name="Brooks K."/>
            <person name="Cerdeno-Tarraga A.-M."/>
            <person name="Chillingworth T."/>
            <person name="Cronin A."/>
            <person name="Davies R.M."/>
            <person name="Davis P."/>
            <person name="Dougan G."/>
            <person name="Feltwell T."/>
            <person name="Hamlin N."/>
            <person name="Holroyd S."/>
            <person name="Jagels K."/>
            <person name="Karlyshev A.V."/>
            <person name="Leather S."/>
            <person name="Moule S."/>
            <person name="Oyston P.C.F."/>
            <person name="Quail M.A."/>
            <person name="Rutherford K.M."/>
            <person name="Simmonds M."/>
            <person name="Skelton J."/>
            <person name="Stevens K."/>
            <person name="Whitehead S."/>
            <person name="Barrell B.G."/>
        </authorList>
    </citation>
    <scope>NUCLEOTIDE SEQUENCE [LARGE SCALE GENOMIC DNA]</scope>
    <source>
        <strain>CO-92 / Biovar Orientalis</strain>
    </source>
</reference>
<reference key="3">
    <citation type="journal article" date="2004" name="DNA Res.">
        <title>Complete genome sequence of Yersinia pestis strain 91001, an isolate avirulent to humans.</title>
        <authorList>
            <person name="Song Y."/>
            <person name="Tong Z."/>
            <person name="Wang J."/>
            <person name="Wang L."/>
            <person name="Guo Z."/>
            <person name="Han Y."/>
            <person name="Zhang J."/>
            <person name="Pei D."/>
            <person name="Zhou D."/>
            <person name="Qin H."/>
            <person name="Pang X."/>
            <person name="Han Y."/>
            <person name="Zhai J."/>
            <person name="Li M."/>
            <person name="Cui B."/>
            <person name="Qi Z."/>
            <person name="Jin L."/>
            <person name="Dai R."/>
            <person name="Chen F."/>
            <person name="Li S."/>
            <person name="Ye C."/>
            <person name="Du Z."/>
            <person name="Lin W."/>
            <person name="Wang J."/>
            <person name="Yu J."/>
            <person name="Yang H."/>
            <person name="Wang J."/>
            <person name="Huang P."/>
            <person name="Yang R."/>
        </authorList>
    </citation>
    <scope>NUCLEOTIDE SEQUENCE [LARGE SCALE GENOMIC DNA]</scope>
    <source>
        <strain>91001 / Biovar Mediaevalis</strain>
    </source>
</reference>
<protein>
    <recommendedName>
        <fullName evidence="1">Sigma factor-binding protein Crl</fullName>
    </recommendedName>
</protein>
<dbReference type="EMBL" id="AE009952">
    <property type="protein sequence ID" value="AAM84546.1"/>
    <property type="molecule type" value="Genomic_DNA"/>
</dbReference>
<dbReference type="EMBL" id="AL590842">
    <property type="protein sequence ID" value="CAL21817.1"/>
    <property type="molecule type" value="Genomic_DNA"/>
</dbReference>
<dbReference type="EMBL" id="AE017042">
    <property type="protein sequence ID" value="AAS60976.1"/>
    <property type="molecule type" value="Genomic_DNA"/>
</dbReference>
<dbReference type="PIR" id="AF0391">
    <property type="entry name" value="AF0391"/>
</dbReference>
<dbReference type="RefSeq" id="WP_002208702.1">
    <property type="nucleotide sequence ID" value="NZ_WUCM01000034.1"/>
</dbReference>
<dbReference type="RefSeq" id="YP_002348125.1">
    <property type="nucleotide sequence ID" value="NC_003143.1"/>
</dbReference>
<dbReference type="SMR" id="Q7CK59"/>
<dbReference type="STRING" id="214092.YPO3223"/>
<dbReference type="PaxDb" id="214092-YPO3223"/>
<dbReference type="DNASU" id="1145912"/>
<dbReference type="EnsemblBacteria" id="AAS60976">
    <property type="protein sequence ID" value="AAS60976"/>
    <property type="gene ID" value="YP_0710"/>
</dbReference>
<dbReference type="GeneID" id="57975495"/>
<dbReference type="KEGG" id="ype:YPO3223"/>
<dbReference type="KEGG" id="ypk:y0965"/>
<dbReference type="KEGG" id="ypm:YP_0710"/>
<dbReference type="PATRIC" id="fig|1028802.3.peg.76"/>
<dbReference type="eggNOG" id="ENOG502ZQ8E">
    <property type="taxonomic scope" value="Bacteria"/>
</dbReference>
<dbReference type="HOGENOM" id="CLU_136773_0_0_6"/>
<dbReference type="OMA" id="FWGWWLE"/>
<dbReference type="OrthoDB" id="6428303at2"/>
<dbReference type="Proteomes" id="UP000000815">
    <property type="component" value="Chromosome"/>
</dbReference>
<dbReference type="Proteomes" id="UP000001019">
    <property type="component" value="Chromosome"/>
</dbReference>
<dbReference type="Proteomes" id="UP000002490">
    <property type="component" value="Chromosome"/>
</dbReference>
<dbReference type="GO" id="GO:0005737">
    <property type="term" value="C:cytoplasm"/>
    <property type="evidence" value="ECO:0007669"/>
    <property type="project" value="UniProtKB-SubCell"/>
</dbReference>
<dbReference type="GO" id="GO:0045893">
    <property type="term" value="P:positive regulation of DNA-templated transcription"/>
    <property type="evidence" value="ECO:0007669"/>
    <property type="project" value="UniProtKB-UniRule"/>
</dbReference>
<dbReference type="Gene3D" id="3.30.310.230">
    <property type="entry name" value="Sigma factor-binding protein Crl monomer"/>
    <property type="match status" value="1"/>
</dbReference>
<dbReference type="HAMAP" id="MF_01178">
    <property type="entry name" value="Crl"/>
    <property type="match status" value="1"/>
</dbReference>
<dbReference type="InterPro" id="IPR009986">
    <property type="entry name" value="Tscrpt_reg_Crl"/>
</dbReference>
<dbReference type="InterPro" id="IPR038208">
    <property type="entry name" value="Tscrpt_reg_Crl_sf"/>
</dbReference>
<dbReference type="NCBIfam" id="NF008217">
    <property type="entry name" value="PRK10984.1"/>
    <property type="match status" value="1"/>
</dbReference>
<dbReference type="Pfam" id="PF07417">
    <property type="entry name" value="Crl"/>
    <property type="match status" value="1"/>
</dbReference>
<proteinExistence type="inferred from homology"/>
<sequence length="133" mass="15386">MTLTSAHPKSKLMKRFAALGPYLREGQCQNDHFFFDCLAVCINVKLAPEKREFWGWWIELEPSAGRFTYVYQLGLFNKEGNWNAEKISDPEVQDKLESTLRSFHLRLEEMLASIDMKLEPAADFNDQPVKLSA</sequence>